<keyword id="KW-0256">Endoplasmic reticulum</keyword>
<keyword id="KW-0444">Lipid biosynthesis</keyword>
<keyword id="KW-0443">Lipid metabolism</keyword>
<keyword id="KW-0472">Membrane</keyword>
<keyword id="KW-1185">Reference proteome</keyword>
<keyword id="KW-0752">Steroid biosynthesis</keyword>
<keyword id="KW-0753">Steroid metabolism</keyword>
<keyword id="KW-0756">Sterol biosynthesis</keyword>
<keyword id="KW-1207">Sterol metabolism</keyword>
<keyword id="KW-0812">Transmembrane</keyword>
<keyword id="KW-1133">Transmembrane helix</keyword>
<sequence length="148" mass="17135">MFSLQDVITTTKTTLAAMPKGYLPKWLLFISIVSVFNSIQTYVSGLELTRKVYERKPTETTHLSARTFGTWTFISCVIRFYGAMYLNEPHIFELVFMSYMVALFHFGSELLIFRTCKLGKGFMGPLVVSTTSLVWMYKQREYYTGVAW</sequence>
<organism>
    <name type="scientific">Saccharomyces cerevisiae (strain ATCC 204508 / S288c)</name>
    <name type="common">Baker's yeast</name>
    <dbReference type="NCBI Taxonomy" id="559292"/>
    <lineage>
        <taxon>Eukaryota</taxon>
        <taxon>Fungi</taxon>
        <taxon>Dikarya</taxon>
        <taxon>Ascomycota</taxon>
        <taxon>Saccharomycotina</taxon>
        <taxon>Saccharomycetes</taxon>
        <taxon>Saccharomycetales</taxon>
        <taxon>Saccharomycetaceae</taxon>
        <taxon>Saccharomyces</taxon>
    </lineage>
</organism>
<reference key="1">
    <citation type="journal article" date="1997" name="Nature">
        <title>The nucleotide sequence of Saccharomyces cerevisiae chromosome V.</title>
        <authorList>
            <person name="Dietrich F.S."/>
            <person name="Mulligan J.T."/>
            <person name="Hennessy K.M."/>
            <person name="Yelton M.A."/>
            <person name="Allen E."/>
            <person name="Araujo R."/>
            <person name="Aviles E."/>
            <person name="Berno A."/>
            <person name="Brennan T."/>
            <person name="Carpenter J."/>
            <person name="Chen E."/>
            <person name="Cherry J.M."/>
            <person name="Chung E."/>
            <person name="Duncan M."/>
            <person name="Guzman E."/>
            <person name="Hartzell G."/>
            <person name="Hunicke-Smith S."/>
            <person name="Hyman R.W."/>
            <person name="Kayser A."/>
            <person name="Komp C."/>
            <person name="Lashkari D."/>
            <person name="Lew H."/>
            <person name="Lin D."/>
            <person name="Mosedale D."/>
            <person name="Nakahara K."/>
            <person name="Namath A."/>
            <person name="Norgren R."/>
            <person name="Oefner P."/>
            <person name="Oh C."/>
            <person name="Petel F.X."/>
            <person name="Roberts D."/>
            <person name="Sehl P."/>
            <person name="Schramm S."/>
            <person name="Shogren T."/>
            <person name="Smith V."/>
            <person name="Taylor P."/>
            <person name="Wei Y."/>
            <person name="Botstein D."/>
            <person name="Davis R.W."/>
        </authorList>
    </citation>
    <scope>NUCLEOTIDE SEQUENCE [LARGE SCALE GENOMIC DNA]</scope>
    <source>
        <strain>ATCC 204508 / S288c</strain>
    </source>
</reference>
<reference key="2">
    <citation type="journal article" date="2014" name="G3 (Bethesda)">
        <title>The reference genome sequence of Saccharomyces cerevisiae: Then and now.</title>
        <authorList>
            <person name="Engel S.R."/>
            <person name="Dietrich F.S."/>
            <person name="Fisk D.G."/>
            <person name="Binkley G."/>
            <person name="Balakrishnan R."/>
            <person name="Costanzo M.C."/>
            <person name="Dwight S.S."/>
            <person name="Hitz B.C."/>
            <person name="Karra K."/>
            <person name="Nash R.S."/>
            <person name="Weng S."/>
            <person name="Wong E.D."/>
            <person name="Lloyd P."/>
            <person name="Skrzypek M.S."/>
            <person name="Miyasato S.R."/>
            <person name="Simison M."/>
            <person name="Cherry J.M."/>
        </authorList>
    </citation>
    <scope>GENOME REANNOTATION</scope>
    <source>
        <strain>ATCC 204508 / S288c</strain>
    </source>
</reference>
<reference key="3">
    <citation type="journal article" date="2007" name="Genome Res.">
        <title>Approaching a complete repository of sequence-verified protein-encoding clones for Saccharomyces cerevisiae.</title>
        <authorList>
            <person name="Hu Y."/>
            <person name="Rolfs A."/>
            <person name="Bhullar B."/>
            <person name="Murthy T.V.S."/>
            <person name="Zhu C."/>
            <person name="Berger M.F."/>
            <person name="Camargo A.A."/>
            <person name="Kelley F."/>
            <person name="McCarron S."/>
            <person name="Jepson D."/>
            <person name="Richardson A."/>
            <person name="Raphael J."/>
            <person name="Moreira D."/>
            <person name="Taycher E."/>
            <person name="Zuo D."/>
            <person name="Mohr S."/>
            <person name="Kane M.F."/>
            <person name="Williamson J."/>
            <person name="Simpson A.J.G."/>
            <person name="Bulyk M.L."/>
            <person name="Harlow E."/>
            <person name="Marsischky G."/>
            <person name="Kolodner R.D."/>
            <person name="LaBaer J."/>
        </authorList>
    </citation>
    <scope>NUCLEOTIDE SEQUENCE [GENOMIC DNA]</scope>
    <source>
        <strain>ATCC 204508 / S288c</strain>
    </source>
</reference>
<reference key="4">
    <citation type="journal article" date="2001" name="J. Lipid Res.">
        <title>A novel gene conserved from yeast to humans is involved in sterol biosynthesis.</title>
        <authorList>
            <person name="Gachotte D."/>
            <person name="Eckstein J."/>
            <person name="Barbuch R."/>
            <person name="Hughes T."/>
            <person name="Roberts C."/>
            <person name="Bard M."/>
        </authorList>
    </citation>
    <scope>FUNCTION</scope>
</reference>
<reference key="5">
    <citation type="journal article" date="2002" name="Proc. Natl. Acad. Sci. U.S.A.">
        <title>Protein-protein interactions among C-4 demethylation enzymes involved in yeast sterol biosynthesis.</title>
        <authorList>
            <person name="Mo C."/>
            <person name="Valachovic M."/>
            <person name="Randall S.K."/>
            <person name="Nickels J.T."/>
            <person name="Bard M."/>
        </authorList>
    </citation>
    <scope>FUNCTION</scope>
    <scope>SUBUNIT</scope>
    <scope>INTERACTION WITH ERG25 AND ERG27</scope>
    <scope>SUBCELLULAR LOCATION</scope>
</reference>
<reference key="6">
    <citation type="journal article" date="2003" name="Nature">
        <title>Global analysis of protein expression in yeast.</title>
        <authorList>
            <person name="Ghaemmaghami S."/>
            <person name="Huh W.-K."/>
            <person name="Bower K."/>
            <person name="Howson R.W."/>
            <person name="Belle A."/>
            <person name="Dephoure N."/>
            <person name="O'Shea E.K."/>
            <person name="Weissman J.S."/>
        </authorList>
    </citation>
    <scope>LEVEL OF PROTEIN EXPRESSION [LARGE SCALE ANALYSIS]</scope>
</reference>
<reference key="7">
    <citation type="journal article" date="2004" name="Biochim. Biophys. Acta">
        <title>The ERG28-encoded protein, Erg28p, interacts with both the sterol C-4 demethylation enzyme complex as well as the late biosynthetic protein, the C-24 sterol methyltransferase (Erg6p).</title>
        <authorList>
            <person name="Mo C."/>
            <person name="Valachovic M."/>
            <person name="Bard M."/>
        </authorList>
    </citation>
    <scope>FUNCTION</scope>
    <scope>INTERACTION WITH ERG6</scope>
</reference>
<reference key="8">
    <citation type="journal article" date="2005" name="J. Lipid Res.">
        <title>Erg28p is a key protein in the yeast sterol biosynthetic enzyme complex.</title>
        <authorList>
            <person name="Mo C."/>
            <person name="Bard M."/>
        </authorList>
    </citation>
    <scope>FUNCTION</scope>
    <scope>INTERACTION WITH ERG1; ERG3; ERG5; ERG6; ERG11; ERG25; ERG26 AND ERG27</scope>
</reference>
<reference key="9">
    <citation type="journal article" date="2006" name="Proc. Natl. Acad. Sci. U.S.A.">
        <title>A global topology map of the Saccharomyces cerevisiae membrane proteome.</title>
        <authorList>
            <person name="Kim H."/>
            <person name="Melen K."/>
            <person name="Oesterberg M."/>
            <person name="von Heijne G."/>
        </authorList>
    </citation>
    <scope>TOPOLOGY [LARGE SCALE ANALYSIS]</scope>
    <source>
        <strain>ATCC 208353 / W303-1A</strain>
    </source>
</reference>
<reference key="10">
    <citation type="journal article" date="2020" name="Genes (Basel)">
        <title>Regulation of ergosterol biosynthesis in Saccharomyces cerevisiae.</title>
        <authorList>
            <person name="Jorda T."/>
            <person name="Puig S."/>
        </authorList>
    </citation>
    <scope>REVIEW ON ERGOSTEROL BIOSYNTHESIS</scope>
</reference>
<dbReference type="EMBL" id="U18796">
    <property type="protein sequence ID" value="AAB64579.1"/>
    <property type="molecule type" value="Genomic_DNA"/>
</dbReference>
<dbReference type="EMBL" id="AY558453">
    <property type="protein sequence ID" value="AAS56779.1"/>
    <property type="molecule type" value="Genomic_DNA"/>
</dbReference>
<dbReference type="EMBL" id="BK006939">
    <property type="protein sequence ID" value="DAA07698.1"/>
    <property type="molecule type" value="Genomic_DNA"/>
</dbReference>
<dbReference type="PIR" id="S50547">
    <property type="entry name" value="S50547"/>
</dbReference>
<dbReference type="RefSeq" id="NP_010962.1">
    <property type="nucleotide sequence ID" value="NM_001178935.1"/>
</dbReference>
<dbReference type="BioGRID" id="36780">
    <property type="interactions" value="39"/>
</dbReference>
<dbReference type="DIP" id="DIP-2672N"/>
<dbReference type="FunCoup" id="P40030">
    <property type="interactions" value="360"/>
</dbReference>
<dbReference type="IntAct" id="P40030">
    <property type="interactions" value="15"/>
</dbReference>
<dbReference type="MINT" id="P40030"/>
<dbReference type="STRING" id="4932.YER044C"/>
<dbReference type="PaxDb" id="4932-YER044C"/>
<dbReference type="PeptideAtlas" id="P40030"/>
<dbReference type="EnsemblFungi" id="YER044C_mRNA">
    <property type="protein sequence ID" value="YER044C"/>
    <property type="gene ID" value="YER044C"/>
</dbReference>
<dbReference type="GeneID" id="856767"/>
<dbReference type="KEGG" id="sce:YER044C"/>
<dbReference type="AGR" id="SGD:S000000846"/>
<dbReference type="SGD" id="S000000846">
    <property type="gene designation" value="ERG28"/>
</dbReference>
<dbReference type="VEuPathDB" id="FungiDB:YER044C"/>
<dbReference type="eggNOG" id="KOG3455">
    <property type="taxonomic scope" value="Eukaryota"/>
</dbReference>
<dbReference type="GeneTree" id="ENSGT00390000010925"/>
<dbReference type="HOGENOM" id="CLU_114589_0_0_1"/>
<dbReference type="InParanoid" id="P40030"/>
<dbReference type="OMA" id="NIAIWTY"/>
<dbReference type="OrthoDB" id="6485510at2759"/>
<dbReference type="BioCyc" id="MetaCyc:MONOMER3O-271"/>
<dbReference type="BioCyc" id="YEAST:MONOMER3O-271"/>
<dbReference type="BioGRID-ORCS" id="856767">
    <property type="hits" value="2 hits in 10 CRISPR screens"/>
</dbReference>
<dbReference type="PRO" id="PR:P40030"/>
<dbReference type="Proteomes" id="UP000002311">
    <property type="component" value="Chromosome V"/>
</dbReference>
<dbReference type="RNAct" id="P40030">
    <property type="molecule type" value="protein"/>
</dbReference>
<dbReference type="GO" id="GO:0005783">
    <property type="term" value="C:endoplasmic reticulum"/>
    <property type="evidence" value="ECO:0007005"/>
    <property type="project" value="SGD"/>
</dbReference>
<dbReference type="GO" id="GO:0005789">
    <property type="term" value="C:endoplasmic reticulum membrane"/>
    <property type="evidence" value="ECO:0000314"/>
    <property type="project" value="SGD"/>
</dbReference>
<dbReference type="GO" id="GO:0030674">
    <property type="term" value="F:protein-macromolecule adaptor activity"/>
    <property type="evidence" value="ECO:0000353"/>
    <property type="project" value="SGD"/>
</dbReference>
<dbReference type="GO" id="GO:0006696">
    <property type="term" value="P:ergosterol biosynthetic process"/>
    <property type="evidence" value="ECO:0000314"/>
    <property type="project" value="SGD"/>
</dbReference>
<dbReference type="InterPro" id="IPR005352">
    <property type="entry name" value="Erg28"/>
</dbReference>
<dbReference type="PANTHER" id="PTHR15451:SF19">
    <property type="entry name" value="ERGOSTEROL BIOSYNTHETIC PROTEIN 28 HOMOLOG"/>
    <property type="match status" value="1"/>
</dbReference>
<dbReference type="PANTHER" id="PTHR15451">
    <property type="entry name" value="ERGOSTEROL BIOSYNTHETIC PROTEIN 28-RELATED"/>
    <property type="match status" value="1"/>
</dbReference>
<dbReference type="Pfam" id="PF03694">
    <property type="entry name" value="Erg28"/>
    <property type="match status" value="1"/>
</dbReference>
<comment type="function">
    <text evidence="2 3 5 6 8">Part of the third module of ergosterol biosynthesis pathway that includes the late steps of the pathway (PubMed:11160377, PubMed:12119386, PubMed:15522820, PubMed:15995173). ERG28 has a role as a scaffold to help anchor the catalytic components of the C-4 demethylation complex ERG25, ERG26 and ERG27 to the endoplasmic reticulum (PubMed:12119386, PubMed:15522820, PubMed:15995173). The third module or late pathway involves the ergosterol synthesis itself through consecutive reactions that mainly occur in the endoplasmic reticulum (ER) membrane. Firstly, the squalene synthase ERG9 catalyzes the condensation of 2 farnesyl pyrophosphate moieties to form squalene, which is the precursor of all steroids. Squalene synthase is crucial for balancing the incorporation of farnesyl diphosphate (FPP) into sterol and nonsterol isoprene synthesis. Secondly, the squalene epoxidase ERG1 catalyzes the stereospecific oxidation of squalene to (S)-2,3-epoxysqualene, which is considered to be a rate-limiting enzyme in steroid biosynthesis. Then, the lanosterol synthase ERG7 catalyzes the cyclization of (S)-2,3 oxidosqualene to lanosterol, a reaction that forms the sterol core. In the next steps, lanosterol is transformed to zymosterol through a complex process involving various demethylation, reduction and desaturation reactions. The lanosterol 14-alpha-demethylase ERG11 (also known as CYP51) catalyzes C14-demethylation of lanosterol to produce 4,4'-dimethyl cholesta-8,14,24-triene-3-beta-ol, which is critical for ergosterol biosynthesis. The C-14 reductase ERG24 reduces the C14=C15 double bond of 4,4-dimethyl-cholesta-8,14,24-trienol to produce 4,4-dimethyl-cholesta-8,24-dienol. 4,4-dimethyl-cholesta-8,24-dienol is substrate of the C-4 demethylation complex ERG25-ERG26-ERG27 in which ERG25 catalyzes the three-step monooxygenation required for the demethylation of 4,4-dimethyl and 4alpha-methylsterols, ERG26 catalyzes the oxidative decarboxylation that results in a reduction of the 3-beta-hydroxy group at the C-3 carbon to an oxo group, and ERG27 is responsible for the reduction of the keto group on the C-3. ERG28 has a role as a scaffold to help anchor ERG25, ERG26 and ERG27 to the endoplasmic reticulum and ERG29 regulates the activity of the iron-containing C4-methylsterol oxidase ERG25. Then, the sterol 24-C-methyltransferase ERG6 catalyzes the methyl transfer from S-adenosyl-methionine to the C-24 of zymosterol to form fecosterol. The C-8 sterol isomerase ERG2 catalyzes the reaction which results in unsaturation at C-7 in the B ring of sterols and thus converts fecosterol to episterol. The sterol-C5-desaturase ERG3 then catalyzes the introduction of a C-5 double bond in the B ring to produce 5-dehydroepisterol. The C-22 sterol desaturase ERG5 further converts 5-dehydroepisterol into ergosta-5,7,22,24(28)-tetraen-3beta-ol by forming the C-22(23) double bond in the sterol side chain. Finally, ergosta-5,7,22,24(28)-tetraen-3beta-ol is substrate of the C-24(28) sterol reductase ERG4 to produce ergosterol (PubMed:32679672).</text>
</comment>
<comment type="subunit">
    <text evidence="3 5 6">Heterotetramer of ERG25, ERG26, ERG27 and ERG28. ERG28 acts as a scaffold to tether ERG27 and other 4,4-demethylation-related enzymes, forming a demethylation enzyme complex, in the endoplasmic reticulum. Interacts with ERG25, ERG26 and ERG27. Also interacts with ERG1, ERG3, ERG5, ERG6 and ERG11.</text>
</comment>
<comment type="interaction">
    <interactant intactId="EBI-22518">
        <id>P40030</id>
    </interactant>
    <interactant intactId="EBI-6506">
        <id>P53045</id>
        <label>ERG25</label>
    </interactant>
    <organismsDiffer>false</organismsDiffer>
    <experiments>3</experiments>
</comment>
<comment type="interaction">
    <interactant intactId="EBI-22518">
        <id>P40030</id>
    </interactant>
    <interactant intactId="EBI-6514">
        <id>P53199</id>
        <label>ERG26</label>
    </interactant>
    <organismsDiffer>false</organismsDiffer>
    <experiments>3</experiments>
</comment>
<comment type="interaction">
    <interactant intactId="EBI-22518">
        <id>P40030</id>
    </interactant>
    <interactant intactId="EBI-38132">
        <id>Q12452</id>
        <label>ERG27</label>
    </interactant>
    <organismsDiffer>false</organismsDiffer>
    <experiments>6</experiments>
</comment>
<comment type="interaction">
    <interactant intactId="EBI-22518">
        <id>P40030</id>
    </interactant>
    <interactant intactId="EBI-3761544">
        <id>P51533</id>
        <label>PDR10</label>
    </interactant>
    <organismsDiffer>false</organismsDiffer>
    <experiments>2</experiments>
</comment>
<comment type="subcellular location">
    <subcellularLocation>
        <location evidence="10">Endoplasmic reticulum membrane</location>
        <topology evidence="10">Multi-pass membrane protein</topology>
    </subcellularLocation>
</comment>
<comment type="miscellaneous">
    <text evidence="4">Present with 377 molecules/cell in log phase SD medium.</text>
</comment>
<comment type="similarity">
    <text evidence="9">Belongs to the ERG28 family.</text>
</comment>
<gene>
    <name evidence="7" type="primary">ERG28</name>
    <name type="synonym">BUD18</name>
    <name type="ordered locus">YER044C</name>
</gene>
<evidence type="ECO:0000255" key="1"/>
<evidence type="ECO:0000269" key="2">
    <source>
    </source>
</evidence>
<evidence type="ECO:0000269" key="3">
    <source>
    </source>
</evidence>
<evidence type="ECO:0000269" key="4">
    <source>
    </source>
</evidence>
<evidence type="ECO:0000269" key="5">
    <source>
    </source>
</evidence>
<evidence type="ECO:0000269" key="6">
    <source>
    </source>
</evidence>
<evidence type="ECO:0000303" key="7">
    <source>
    </source>
</evidence>
<evidence type="ECO:0000303" key="8">
    <source>
    </source>
</evidence>
<evidence type="ECO:0000305" key="9"/>
<evidence type="ECO:0000305" key="10">
    <source>
    </source>
</evidence>
<accession>P40030</accession>
<accession>D3DLU4</accession>
<proteinExistence type="evidence at protein level"/>
<name>ERG28_YEAST</name>
<feature type="chain" id="PRO_0000193908" description="Ergosterol biosynthetic protein 28">
    <location>
        <begin position="1"/>
        <end position="148"/>
    </location>
</feature>
<feature type="topological domain" description="Cytoplasmic" evidence="1">
    <location>
        <begin position="1"/>
        <end position="25"/>
    </location>
</feature>
<feature type="transmembrane region" description="Helical" evidence="1">
    <location>
        <begin position="26"/>
        <end position="46"/>
    </location>
</feature>
<feature type="topological domain" description="Lumenal" evidence="1">
    <location>
        <begin position="47"/>
        <end position="92"/>
    </location>
</feature>
<feature type="transmembrane region" description="Helical" evidence="1">
    <location>
        <begin position="93"/>
        <end position="113"/>
    </location>
</feature>
<feature type="topological domain" description="Cytoplasmic" evidence="1">
    <location>
        <begin position="114"/>
        <end position="120"/>
    </location>
</feature>
<feature type="transmembrane region" description="Helical" evidence="1">
    <location>
        <begin position="121"/>
        <end position="136"/>
    </location>
</feature>
<feature type="topological domain" description="Lumenal" evidence="1">
    <location>
        <begin position="137"/>
        <end position="148"/>
    </location>
</feature>
<protein>
    <recommendedName>
        <fullName evidence="7">Ergosterol biosynthetic protein 28</fullName>
    </recommendedName>
</protein>